<keyword id="KW-0687">Ribonucleoprotein</keyword>
<keyword id="KW-0689">Ribosomal protein</keyword>
<name>RL31_CYAPA</name>
<reference key="1">
    <citation type="submission" date="1998-06" db="EMBL/GenBank/DDBJ databases">
        <title>A cDNA for 60s ribosomal protein L31.</title>
        <authorList>
            <person name="Nickol A.A."/>
            <person name="Mueller N.E."/>
            <person name="Schenk H.E.A."/>
        </authorList>
    </citation>
    <scope>NUCLEOTIDE SEQUENCE [MRNA]</scope>
    <source>
        <strain>Pringsheim B 29.80</strain>
    </source>
</reference>
<dbReference type="EMBL" id="AJ005204">
    <property type="protein sequence ID" value="CAB45375.1"/>
    <property type="molecule type" value="mRNA"/>
</dbReference>
<dbReference type="SMR" id="Q9XGL4"/>
<dbReference type="GO" id="GO:0022625">
    <property type="term" value="C:cytosolic large ribosomal subunit"/>
    <property type="evidence" value="ECO:0007669"/>
    <property type="project" value="TreeGrafter"/>
</dbReference>
<dbReference type="GO" id="GO:0003735">
    <property type="term" value="F:structural constituent of ribosome"/>
    <property type="evidence" value="ECO:0007669"/>
    <property type="project" value="InterPro"/>
</dbReference>
<dbReference type="GO" id="GO:0002181">
    <property type="term" value="P:cytoplasmic translation"/>
    <property type="evidence" value="ECO:0007669"/>
    <property type="project" value="TreeGrafter"/>
</dbReference>
<dbReference type="CDD" id="cd00463">
    <property type="entry name" value="Ribosomal_L31e"/>
    <property type="match status" value="1"/>
</dbReference>
<dbReference type="FunFam" id="3.10.440.10:FF:000001">
    <property type="entry name" value="60S ribosomal protein L31"/>
    <property type="match status" value="1"/>
</dbReference>
<dbReference type="Gene3D" id="3.10.440.10">
    <property type="match status" value="1"/>
</dbReference>
<dbReference type="InterPro" id="IPR000054">
    <property type="entry name" value="Ribosomal_eL31"/>
</dbReference>
<dbReference type="InterPro" id="IPR020052">
    <property type="entry name" value="Ribosomal_eL31_CS"/>
</dbReference>
<dbReference type="InterPro" id="IPR023621">
    <property type="entry name" value="Ribosomal_eL31_dom_sf"/>
</dbReference>
<dbReference type="PANTHER" id="PTHR10956">
    <property type="entry name" value="60S RIBOSOMAL PROTEIN L31"/>
    <property type="match status" value="1"/>
</dbReference>
<dbReference type="PANTHER" id="PTHR10956:SF0">
    <property type="entry name" value="60S RIBOSOMAL PROTEIN L31"/>
    <property type="match status" value="1"/>
</dbReference>
<dbReference type="Pfam" id="PF01198">
    <property type="entry name" value="Ribosomal_L31e"/>
    <property type="match status" value="1"/>
</dbReference>
<dbReference type="SMART" id="SM01380">
    <property type="entry name" value="Ribosomal_L31e"/>
    <property type="match status" value="1"/>
</dbReference>
<dbReference type="SUPFAM" id="SSF54575">
    <property type="entry name" value="Ribosomal protein L31e"/>
    <property type="match status" value="1"/>
</dbReference>
<dbReference type="PROSITE" id="PS01144">
    <property type="entry name" value="RIBOSOMAL_L31E"/>
    <property type="match status" value="1"/>
</dbReference>
<protein>
    <recommendedName>
        <fullName evidence="1">Large ribosomal subunit protein eL31</fullName>
    </recommendedName>
    <alternativeName>
        <fullName>60S ribosomal protein L31</fullName>
    </alternativeName>
</protein>
<proteinExistence type="inferred from homology"/>
<comment type="similarity">
    <text evidence="1">Belongs to the eukaryotic ribosomal protein eL31 family.</text>
</comment>
<organism>
    <name type="scientific">Cyanophora paradoxa</name>
    <dbReference type="NCBI Taxonomy" id="2762"/>
    <lineage>
        <taxon>Eukaryota</taxon>
        <taxon>Glaucocystophyceae</taxon>
        <taxon>Cyanophoraceae</taxon>
        <taxon>Cyanophora</taxon>
    </lineage>
</organism>
<sequence length="119" mass="13813">MPKAENKKSRAAEIVTREYTINLHKRLHGVGFKKRAPRAVKEIKKFASKIMGTTDVRVDPRLNKFVWNQGIRSVPYRVRVRLARKRNDDEDAKEKLYTLVTYVPVTSFKGLQTQNVDAE</sequence>
<evidence type="ECO:0000305" key="1"/>
<accession>Q9XGL4</accession>
<gene>
    <name type="primary">RPL31</name>
</gene>
<feature type="chain" id="PRO_0000153779" description="Large ribosomal subunit protein eL31">
    <location>
        <begin position="1"/>
        <end position="119"/>
    </location>
</feature>